<proteinExistence type="inferred from homology"/>
<accession>Q9KSL8</accession>
<comment type="function">
    <text evidence="1">Joins adenosylcobinamide-GDP and alpha-ribazole to generate adenosylcobalamin (Ado-cobalamin). Also synthesizes adenosylcobalamin 5'-phosphate from adenosylcobinamide-GDP and alpha-ribazole 5'-phosphate.</text>
</comment>
<comment type="catalytic activity">
    <reaction evidence="1">
        <text>alpha-ribazole + adenosylcob(III)inamide-GDP = adenosylcob(III)alamin + GMP + H(+)</text>
        <dbReference type="Rhea" id="RHEA:16049"/>
        <dbReference type="ChEBI" id="CHEBI:10329"/>
        <dbReference type="ChEBI" id="CHEBI:15378"/>
        <dbReference type="ChEBI" id="CHEBI:18408"/>
        <dbReference type="ChEBI" id="CHEBI:58115"/>
        <dbReference type="ChEBI" id="CHEBI:60487"/>
        <dbReference type="EC" id="2.7.8.26"/>
    </reaction>
</comment>
<comment type="catalytic activity">
    <reaction evidence="1">
        <text>alpha-ribazole 5'-phosphate + adenosylcob(III)inamide-GDP = adenosylcob(III)alamin 5'-phosphate + GMP + H(+)</text>
        <dbReference type="Rhea" id="RHEA:23560"/>
        <dbReference type="ChEBI" id="CHEBI:15378"/>
        <dbReference type="ChEBI" id="CHEBI:57918"/>
        <dbReference type="ChEBI" id="CHEBI:58115"/>
        <dbReference type="ChEBI" id="CHEBI:60487"/>
        <dbReference type="ChEBI" id="CHEBI:60493"/>
        <dbReference type="EC" id="2.7.8.26"/>
    </reaction>
</comment>
<comment type="cofactor">
    <cofactor evidence="1">
        <name>Mg(2+)</name>
        <dbReference type="ChEBI" id="CHEBI:18420"/>
    </cofactor>
</comment>
<comment type="pathway">
    <text evidence="1">Cofactor biosynthesis; adenosylcobalamin biosynthesis; adenosylcobalamin from cob(II)yrinate a,c-diamide: step 7/7.</text>
</comment>
<comment type="subcellular location">
    <subcellularLocation>
        <location evidence="1">Cell inner membrane</location>
        <topology evidence="1">Multi-pass membrane protein</topology>
    </subcellularLocation>
</comment>
<comment type="similarity">
    <text evidence="1">Belongs to the CobS family.</text>
</comment>
<dbReference type="EC" id="2.7.8.26" evidence="1"/>
<dbReference type="EMBL" id="AE003852">
    <property type="protein sequence ID" value="AAF94397.1"/>
    <property type="molecule type" value="Genomic_DNA"/>
</dbReference>
<dbReference type="PIR" id="A82224">
    <property type="entry name" value="A82224"/>
</dbReference>
<dbReference type="RefSeq" id="NP_230883.1">
    <property type="nucleotide sequence ID" value="NC_002505.1"/>
</dbReference>
<dbReference type="RefSeq" id="WP_000718969.1">
    <property type="nucleotide sequence ID" value="NZ_LT906614.1"/>
</dbReference>
<dbReference type="STRING" id="243277.VC_1238"/>
<dbReference type="DNASU" id="2614675"/>
<dbReference type="EnsemblBacteria" id="AAF94397">
    <property type="protein sequence ID" value="AAF94397"/>
    <property type="gene ID" value="VC_1238"/>
</dbReference>
<dbReference type="KEGG" id="vch:VC_1238"/>
<dbReference type="PATRIC" id="fig|243277.26.peg.1180"/>
<dbReference type="eggNOG" id="COG0368">
    <property type="taxonomic scope" value="Bacteria"/>
</dbReference>
<dbReference type="HOGENOM" id="CLU_057426_1_1_6"/>
<dbReference type="UniPathway" id="UPA00148">
    <property type="reaction ID" value="UER00238"/>
</dbReference>
<dbReference type="Proteomes" id="UP000000584">
    <property type="component" value="Chromosome 1"/>
</dbReference>
<dbReference type="GO" id="GO:0005886">
    <property type="term" value="C:plasma membrane"/>
    <property type="evidence" value="ECO:0007669"/>
    <property type="project" value="UniProtKB-SubCell"/>
</dbReference>
<dbReference type="GO" id="GO:0051073">
    <property type="term" value="F:adenosylcobinamide-GDP ribazoletransferase activity"/>
    <property type="evidence" value="ECO:0007669"/>
    <property type="project" value="UniProtKB-UniRule"/>
</dbReference>
<dbReference type="GO" id="GO:0008818">
    <property type="term" value="F:cobalamin 5'-phosphate synthase activity"/>
    <property type="evidence" value="ECO:0007669"/>
    <property type="project" value="UniProtKB-UniRule"/>
</dbReference>
<dbReference type="GO" id="GO:0009236">
    <property type="term" value="P:cobalamin biosynthetic process"/>
    <property type="evidence" value="ECO:0000318"/>
    <property type="project" value="GO_Central"/>
</dbReference>
<dbReference type="HAMAP" id="MF_00719">
    <property type="entry name" value="CobS"/>
    <property type="match status" value="1"/>
</dbReference>
<dbReference type="InterPro" id="IPR003805">
    <property type="entry name" value="CobS"/>
</dbReference>
<dbReference type="NCBIfam" id="TIGR00317">
    <property type="entry name" value="cobS"/>
    <property type="match status" value="1"/>
</dbReference>
<dbReference type="NCBIfam" id="NF001277">
    <property type="entry name" value="PRK00235.1-3"/>
    <property type="match status" value="1"/>
</dbReference>
<dbReference type="PANTHER" id="PTHR34148">
    <property type="entry name" value="ADENOSYLCOBINAMIDE-GDP RIBAZOLETRANSFERASE"/>
    <property type="match status" value="1"/>
</dbReference>
<dbReference type="PANTHER" id="PTHR34148:SF1">
    <property type="entry name" value="ADENOSYLCOBINAMIDE-GDP RIBAZOLETRANSFERASE"/>
    <property type="match status" value="1"/>
</dbReference>
<dbReference type="Pfam" id="PF02654">
    <property type="entry name" value="CobS"/>
    <property type="match status" value="1"/>
</dbReference>
<gene>
    <name evidence="1" type="primary">cobS</name>
    <name type="ordered locus">VC_1238</name>
</gene>
<organism>
    <name type="scientific">Vibrio cholerae serotype O1 (strain ATCC 39315 / El Tor Inaba N16961)</name>
    <dbReference type="NCBI Taxonomy" id="243277"/>
    <lineage>
        <taxon>Bacteria</taxon>
        <taxon>Pseudomonadati</taxon>
        <taxon>Pseudomonadota</taxon>
        <taxon>Gammaproteobacteria</taxon>
        <taxon>Vibrionales</taxon>
        <taxon>Vibrionaceae</taxon>
        <taxon>Vibrio</taxon>
    </lineage>
</organism>
<name>COBS_VIBCH</name>
<protein>
    <recommendedName>
        <fullName evidence="1">Adenosylcobinamide-GDP ribazoletransferase</fullName>
        <ecNumber evidence="1">2.7.8.26</ecNumber>
    </recommendedName>
    <alternativeName>
        <fullName evidence="1">Cobalamin synthase</fullName>
    </alternativeName>
    <alternativeName>
        <fullName evidence="1">Cobalamin-5'-phosphate synthase</fullName>
    </alternativeName>
</protein>
<sequence>MAAILRYQLELFLLAVSFFSRIPVPVSLPYSSERMNQAGRYFALVGLLLGAICALVYSLATQLFSTNISVFLTMVLSLLLTGAFHEDGLADMADGVGGGMTAERRLEIMKDSRIGTYGSSALIMVLLGKYLLLTELADLTSLVPVWLLAYTLSRAVAASLIRNTPYVSDTDSSKSKPLAQQLSGTDVAVLSLTALATLLYFSWQFIGVMIAASLIFRQIFRQWLIRRLGGFTGDCLGAAQQLMEILIYLILLAFLQHEVMI</sequence>
<feature type="chain" id="PRO_0000146902" description="Adenosylcobinamide-GDP ribazoletransferase">
    <location>
        <begin position="1"/>
        <end position="261"/>
    </location>
</feature>
<feature type="transmembrane region" description="Helical" evidence="1">
    <location>
        <begin position="9"/>
        <end position="29"/>
    </location>
</feature>
<feature type="transmembrane region" description="Helical" evidence="1">
    <location>
        <begin position="41"/>
        <end position="61"/>
    </location>
</feature>
<feature type="transmembrane region" description="Helical" evidence="1">
    <location>
        <begin position="64"/>
        <end position="84"/>
    </location>
</feature>
<feature type="transmembrane region" description="Helical" evidence="1">
    <location>
        <begin position="114"/>
        <end position="134"/>
    </location>
</feature>
<feature type="transmembrane region" description="Helical" evidence="1">
    <location>
        <begin position="141"/>
        <end position="161"/>
    </location>
</feature>
<feature type="transmembrane region" description="Helical" evidence="1">
    <location>
        <begin position="196"/>
        <end position="216"/>
    </location>
</feature>
<feature type="transmembrane region" description="Helical" evidence="1">
    <location>
        <begin position="235"/>
        <end position="255"/>
    </location>
</feature>
<evidence type="ECO:0000255" key="1">
    <source>
        <dbReference type="HAMAP-Rule" id="MF_00719"/>
    </source>
</evidence>
<reference key="1">
    <citation type="journal article" date="2000" name="Nature">
        <title>DNA sequence of both chromosomes of the cholera pathogen Vibrio cholerae.</title>
        <authorList>
            <person name="Heidelberg J.F."/>
            <person name="Eisen J.A."/>
            <person name="Nelson W.C."/>
            <person name="Clayton R.A."/>
            <person name="Gwinn M.L."/>
            <person name="Dodson R.J."/>
            <person name="Haft D.H."/>
            <person name="Hickey E.K."/>
            <person name="Peterson J.D."/>
            <person name="Umayam L.A."/>
            <person name="Gill S.R."/>
            <person name="Nelson K.E."/>
            <person name="Read T.D."/>
            <person name="Tettelin H."/>
            <person name="Richardson D.L."/>
            <person name="Ermolaeva M.D."/>
            <person name="Vamathevan J.J."/>
            <person name="Bass S."/>
            <person name="Qin H."/>
            <person name="Dragoi I."/>
            <person name="Sellers P."/>
            <person name="McDonald L.A."/>
            <person name="Utterback T.R."/>
            <person name="Fleischmann R.D."/>
            <person name="Nierman W.C."/>
            <person name="White O."/>
            <person name="Salzberg S.L."/>
            <person name="Smith H.O."/>
            <person name="Colwell R.R."/>
            <person name="Mekalanos J.J."/>
            <person name="Venter J.C."/>
            <person name="Fraser C.M."/>
        </authorList>
    </citation>
    <scope>NUCLEOTIDE SEQUENCE [LARGE SCALE GENOMIC DNA]</scope>
    <source>
        <strain>ATCC 39315 / El Tor Inaba N16961</strain>
    </source>
</reference>
<keyword id="KW-0997">Cell inner membrane</keyword>
<keyword id="KW-1003">Cell membrane</keyword>
<keyword id="KW-0169">Cobalamin biosynthesis</keyword>
<keyword id="KW-0460">Magnesium</keyword>
<keyword id="KW-0472">Membrane</keyword>
<keyword id="KW-1185">Reference proteome</keyword>
<keyword id="KW-0808">Transferase</keyword>
<keyword id="KW-0812">Transmembrane</keyword>
<keyword id="KW-1133">Transmembrane helix</keyword>